<evidence type="ECO:0000255" key="1">
    <source>
        <dbReference type="HAMAP-Rule" id="MF_01011"/>
    </source>
</evidence>
<accession>Q3K6G9</accession>
<organism>
    <name type="scientific">Pseudomonas fluorescens (strain Pf0-1)</name>
    <dbReference type="NCBI Taxonomy" id="205922"/>
    <lineage>
        <taxon>Bacteria</taxon>
        <taxon>Pseudomonadati</taxon>
        <taxon>Pseudomonadota</taxon>
        <taxon>Gammaproteobacteria</taxon>
        <taxon>Pseudomonadales</taxon>
        <taxon>Pseudomonadaceae</taxon>
        <taxon>Pseudomonas</taxon>
    </lineage>
</organism>
<gene>
    <name evidence="1" type="primary">trmA</name>
    <name type="ordered locus">Pfl01_4898</name>
</gene>
<sequence length="359" mass="40614">MTFDSQAYAAQLEDKVTRLRDLLAPFDAPEPTVFDSPLQNFRLRAEFRLWREGGERHYAMFSQDDKRTPILIEEFPIASLRINQLMPQLKAAWQASAALSHKLFQVEFLTTLAGDAMITLCYHRPLDEHWHAAATKLATDLGVSIIGRSKGKREVLGLDYVVEKLDVGGRTFSYRQPEGAFTQPNGTVNQKMLNWAYEALGDRSDDLLELYCGNGNFTLPLATRVRKVLATEISKTSVNAALSNLAENAVDNVTLVRLSAEELTEALNEVRPFRRLHGIDLKSYEFGSVFVDPPRAGMDPDTCELTRRFDNILYISCNPETLAANIAQLHDTHRITRCALFDQFPWTHHMESGVLLTRR</sequence>
<comment type="function">
    <text evidence="1">Dual-specificity methyltransferase that catalyzes the formation of 5-methyluridine at position 54 (m5U54) in all tRNAs, and that of position 341 (m5U341) in tmRNA (transfer-mRNA).</text>
</comment>
<comment type="catalytic activity">
    <reaction evidence="1">
        <text>uridine(54) in tRNA + S-adenosyl-L-methionine = 5-methyluridine(54) in tRNA + S-adenosyl-L-homocysteine + H(+)</text>
        <dbReference type="Rhea" id="RHEA:42712"/>
        <dbReference type="Rhea" id="RHEA-COMP:10167"/>
        <dbReference type="Rhea" id="RHEA-COMP:10193"/>
        <dbReference type="ChEBI" id="CHEBI:15378"/>
        <dbReference type="ChEBI" id="CHEBI:57856"/>
        <dbReference type="ChEBI" id="CHEBI:59789"/>
        <dbReference type="ChEBI" id="CHEBI:65315"/>
        <dbReference type="ChEBI" id="CHEBI:74447"/>
        <dbReference type="EC" id="2.1.1.35"/>
    </reaction>
</comment>
<comment type="catalytic activity">
    <reaction evidence="1">
        <text>uridine(341) in tmRNA + S-adenosyl-L-methionine = 5-methyluridine(341) in tmRNA + S-adenosyl-L-homocysteine + H(+)</text>
        <dbReference type="Rhea" id="RHEA:43612"/>
        <dbReference type="Rhea" id="RHEA-COMP:10630"/>
        <dbReference type="Rhea" id="RHEA-COMP:10631"/>
        <dbReference type="ChEBI" id="CHEBI:15378"/>
        <dbReference type="ChEBI" id="CHEBI:57856"/>
        <dbReference type="ChEBI" id="CHEBI:59789"/>
        <dbReference type="ChEBI" id="CHEBI:65315"/>
        <dbReference type="ChEBI" id="CHEBI:74447"/>
    </reaction>
</comment>
<comment type="similarity">
    <text evidence="1">Belongs to the class I-like SAM-binding methyltransferase superfamily. RNA M5U methyltransferase family. TrmA subfamily.</text>
</comment>
<keyword id="KW-0489">Methyltransferase</keyword>
<keyword id="KW-0949">S-adenosyl-L-methionine</keyword>
<keyword id="KW-0808">Transferase</keyword>
<keyword id="KW-0819">tRNA processing</keyword>
<feature type="chain" id="PRO_0000281453" description="tRNA/tmRNA (uracil-C(5))-methyltransferase">
    <location>
        <begin position="1"/>
        <end position="359"/>
    </location>
</feature>
<feature type="active site" description="Nucleophile" evidence="1">
    <location>
        <position position="317"/>
    </location>
</feature>
<feature type="active site" description="Proton acceptor" evidence="1">
    <location>
        <position position="351"/>
    </location>
</feature>
<feature type="binding site" evidence="1">
    <location>
        <position position="183"/>
    </location>
    <ligand>
        <name>S-adenosyl-L-methionine</name>
        <dbReference type="ChEBI" id="CHEBI:59789"/>
    </ligand>
</feature>
<feature type="binding site" evidence="1">
    <location>
        <position position="211"/>
    </location>
    <ligand>
        <name>S-adenosyl-L-methionine</name>
        <dbReference type="ChEBI" id="CHEBI:59789"/>
    </ligand>
</feature>
<feature type="binding site" evidence="1">
    <location>
        <position position="216"/>
    </location>
    <ligand>
        <name>S-adenosyl-L-methionine</name>
        <dbReference type="ChEBI" id="CHEBI:59789"/>
    </ligand>
</feature>
<feature type="binding site" evidence="1">
    <location>
        <position position="232"/>
    </location>
    <ligand>
        <name>S-adenosyl-L-methionine</name>
        <dbReference type="ChEBI" id="CHEBI:59789"/>
    </ligand>
</feature>
<feature type="binding site" evidence="1">
    <location>
        <position position="292"/>
    </location>
    <ligand>
        <name>S-adenosyl-L-methionine</name>
        <dbReference type="ChEBI" id="CHEBI:59789"/>
    </ligand>
</feature>
<dbReference type="EC" id="2.1.1.-" evidence="1"/>
<dbReference type="EC" id="2.1.1.35" evidence="1"/>
<dbReference type="EMBL" id="CP000094">
    <property type="protein sequence ID" value="ABA76635.1"/>
    <property type="molecule type" value="Genomic_DNA"/>
</dbReference>
<dbReference type="RefSeq" id="WP_011336039.1">
    <property type="nucleotide sequence ID" value="NC_007492.2"/>
</dbReference>
<dbReference type="SMR" id="Q3K6G9"/>
<dbReference type="KEGG" id="pfo:Pfl01_4898"/>
<dbReference type="eggNOG" id="COG2265">
    <property type="taxonomic scope" value="Bacteria"/>
</dbReference>
<dbReference type="HOGENOM" id="CLU_043022_0_0_6"/>
<dbReference type="Proteomes" id="UP000002704">
    <property type="component" value="Chromosome"/>
</dbReference>
<dbReference type="GO" id="GO:0005829">
    <property type="term" value="C:cytosol"/>
    <property type="evidence" value="ECO:0007669"/>
    <property type="project" value="TreeGrafter"/>
</dbReference>
<dbReference type="GO" id="GO:0019843">
    <property type="term" value="F:rRNA binding"/>
    <property type="evidence" value="ECO:0007669"/>
    <property type="project" value="TreeGrafter"/>
</dbReference>
<dbReference type="GO" id="GO:0030697">
    <property type="term" value="F:tRNA (uracil(54)-C5)-methyltransferase activity, S-adenosyl methionine-dependent"/>
    <property type="evidence" value="ECO:0007669"/>
    <property type="project" value="UniProtKB-UniRule"/>
</dbReference>
<dbReference type="GO" id="GO:0000049">
    <property type="term" value="F:tRNA binding"/>
    <property type="evidence" value="ECO:0007669"/>
    <property type="project" value="TreeGrafter"/>
</dbReference>
<dbReference type="GO" id="GO:0030488">
    <property type="term" value="P:tRNA methylation"/>
    <property type="evidence" value="ECO:0007669"/>
    <property type="project" value="UniProtKB-UniRule"/>
</dbReference>
<dbReference type="CDD" id="cd02440">
    <property type="entry name" value="AdoMet_MTases"/>
    <property type="match status" value="1"/>
</dbReference>
<dbReference type="FunFam" id="2.40.50.1070:FF:000001">
    <property type="entry name" value="tRNA/tmRNA (uracil-C(5))-methyltransferase"/>
    <property type="match status" value="1"/>
</dbReference>
<dbReference type="FunFam" id="3.40.50.150:FF:000012">
    <property type="entry name" value="tRNA/tmRNA (uracil-C(5))-methyltransferase"/>
    <property type="match status" value="1"/>
</dbReference>
<dbReference type="Gene3D" id="2.40.50.1070">
    <property type="match status" value="1"/>
</dbReference>
<dbReference type="Gene3D" id="3.40.50.150">
    <property type="entry name" value="Vaccinia Virus protein VP39"/>
    <property type="match status" value="1"/>
</dbReference>
<dbReference type="HAMAP" id="MF_01011">
    <property type="entry name" value="RNA_methyltr_TrmA"/>
    <property type="match status" value="1"/>
</dbReference>
<dbReference type="InterPro" id="IPR030390">
    <property type="entry name" value="MeTrfase_TrmA_AS"/>
</dbReference>
<dbReference type="InterPro" id="IPR030391">
    <property type="entry name" value="MeTrfase_TrmA_CS"/>
</dbReference>
<dbReference type="InterPro" id="IPR029063">
    <property type="entry name" value="SAM-dependent_MTases_sf"/>
</dbReference>
<dbReference type="InterPro" id="IPR011869">
    <property type="entry name" value="TrmA_MeTrfase"/>
</dbReference>
<dbReference type="InterPro" id="IPR010280">
    <property type="entry name" value="U5_MeTrfase_fam"/>
</dbReference>
<dbReference type="NCBIfam" id="TIGR02143">
    <property type="entry name" value="trmA_only"/>
    <property type="match status" value="1"/>
</dbReference>
<dbReference type="PANTHER" id="PTHR47790">
    <property type="entry name" value="TRNA/TMRNA (URACIL-C(5))-METHYLTRANSFERASE"/>
    <property type="match status" value="1"/>
</dbReference>
<dbReference type="PANTHER" id="PTHR47790:SF2">
    <property type="entry name" value="TRNA_TMRNA (URACIL-C(5))-METHYLTRANSFERASE"/>
    <property type="match status" value="1"/>
</dbReference>
<dbReference type="Pfam" id="PF05958">
    <property type="entry name" value="tRNA_U5-meth_tr"/>
    <property type="match status" value="1"/>
</dbReference>
<dbReference type="SUPFAM" id="SSF53335">
    <property type="entry name" value="S-adenosyl-L-methionine-dependent methyltransferases"/>
    <property type="match status" value="1"/>
</dbReference>
<dbReference type="PROSITE" id="PS51687">
    <property type="entry name" value="SAM_MT_RNA_M5U"/>
    <property type="match status" value="1"/>
</dbReference>
<dbReference type="PROSITE" id="PS01230">
    <property type="entry name" value="TRMA_1"/>
    <property type="match status" value="1"/>
</dbReference>
<dbReference type="PROSITE" id="PS01231">
    <property type="entry name" value="TRMA_2"/>
    <property type="match status" value="1"/>
</dbReference>
<reference key="1">
    <citation type="journal article" date="2009" name="Genome Biol.">
        <title>Genomic and genetic analyses of diversity and plant interactions of Pseudomonas fluorescens.</title>
        <authorList>
            <person name="Silby M.W."/>
            <person name="Cerdeno-Tarraga A.M."/>
            <person name="Vernikos G.S."/>
            <person name="Giddens S.R."/>
            <person name="Jackson R.W."/>
            <person name="Preston G.M."/>
            <person name="Zhang X.-X."/>
            <person name="Moon C.D."/>
            <person name="Gehrig S.M."/>
            <person name="Godfrey S.A.C."/>
            <person name="Knight C.G."/>
            <person name="Malone J.G."/>
            <person name="Robinson Z."/>
            <person name="Spiers A.J."/>
            <person name="Harris S."/>
            <person name="Challis G.L."/>
            <person name="Yaxley A.M."/>
            <person name="Harris D."/>
            <person name="Seeger K."/>
            <person name="Murphy L."/>
            <person name="Rutter S."/>
            <person name="Squares R."/>
            <person name="Quail M.A."/>
            <person name="Saunders E."/>
            <person name="Mavromatis K."/>
            <person name="Brettin T.S."/>
            <person name="Bentley S.D."/>
            <person name="Hothersall J."/>
            <person name="Stephens E."/>
            <person name="Thomas C.M."/>
            <person name="Parkhill J."/>
            <person name="Levy S.B."/>
            <person name="Rainey P.B."/>
            <person name="Thomson N.R."/>
        </authorList>
    </citation>
    <scope>NUCLEOTIDE SEQUENCE [LARGE SCALE GENOMIC DNA]</scope>
    <source>
        <strain>Pf0-1</strain>
    </source>
</reference>
<name>TRMA_PSEPF</name>
<proteinExistence type="inferred from homology"/>
<protein>
    <recommendedName>
        <fullName evidence="1">tRNA/tmRNA (uracil-C(5))-methyltransferase</fullName>
        <ecNumber evidence="1">2.1.1.-</ecNumber>
        <ecNumber evidence="1">2.1.1.35</ecNumber>
    </recommendedName>
    <alternativeName>
        <fullName evidence="1">tRNA (uracil(54)-C(5))-methyltransferase</fullName>
    </alternativeName>
    <alternativeName>
        <fullName evidence="1">tRNA(m5U54)-methyltransferase</fullName>
        <shortName evidence="1">RUMT</shortName>
    </alternativeName>
    <alternativeName>
        <fullName evidence="1">tmRNA (uracil(341)-C(5))-methyltransferase</fullName>
    </alternativeName>
</protein>